<accession>Q28RQ1</accession>
<reference key="1">
    <citation type="submission" date="2006-02" db="EMBL/GenBank/DDBJ databases">
        <title>Complete sequence of chromosome of Jannaschia sp. CCS1.</title>
        <authorList>
            <consortium name="US DOE Joint Genome Institute"/>
            <person name="Copeland A."/>
            <person name="Lucas S."/>
            <person name="Lapidus A."/>
            <person name="Barry K."/>
            <person name="Detter J.C."/>
            <person name="Glavina del Rio T."/>
            <person name="Hammon N."/>
            <person name="Israni S."/>
            <person name="Pitluck S."/>
            <person name="Brettin T."/>
            <person name="Bruce D."/>
            <person name="Han C."/>
            <person name="Tapia R."/>
            <person name="Gilna P."/>
            <person name="Chertkov O."/>
            <person name="Saunders E."/>
            <person name="Schmutz J."/>
            <person name="Larimer F."/>
            <person name="Land M."/>
            <person name="Kyrpides N."/>
            <person name="Lykidis A."/>
            <person name="Moran M.A."/>
            <person name="Belas R."/>
            <person name="Ye W."/>
            <person name="Buchan A."/>
            <person name="Gonzalez J.M."/>
            <person name="Schell M.A."/>
            <person name="Richardson P."/>
        </authorList>
    </citation>
    <scope>NUCLEOTIDE SEQUENCE [LARGE SCALE GENOMIC DNA]</scope>
    <source>
        <strain>CCS1</strain>
    </source>
</reference>
<feature type="chain" id="PRO_1000058004" description="Phosphoglycerate kinase">
    <location>
        <begin position="1"/>
        <end position="396"/>
    </location>
</feature>
<feature type="binding site" evidence="1">
    <location>
        <begin position="21"/>
        <end position="23"/>
    </location>
    <ligand>
        <name>substrate</name>
    </ligand>
</feature>
<feature type="binding site" evidence="1">
    <location>
        <position position="36"/>
    </location>
    <ligand>
        <name>substrate</name>
    </ligand>
</feature>
<feature type="binding site" evidence="1">
    <location>
        <begin position="59"/>
        <end position="62"/>
    </location>
    <ligand>
        <name>substrate</name>
    </ligand>
</feature>
<feature type="binding site" evidence="1">
    <location>
        <position position="114"/>
    </location>
    <ligand>
        <name>substrate</name>
    </ligand>
</feature>
<feature type="binding site" evidence="1">
    <location>
        <position position="147"/>
    </location>
    <ligand>
        <name>substrate</name>
    </ligand>
</feature>
<feature type="binding site" evidence="1">
    <location>
        <position position="197"/>
    </location>
    <ligand>
        <name>ATP</name>
        <dbReference type="ChEBI" id="CHEBI:30616"/>
    </ligand>
</feature>
<feature type="binding site" evidence="1">
    <location>
        <position position="319"/>
    </location>
    <ligand>
        <name>ATP</name>
        <dbReference type="ChEBI" id="CHEBI:30616"/>
    </ligand>
</feature>
<feature type="binding site" evidence="1">
    <location>
        <begin position="349"/>
        <end position="352"/>
    </location>
    <ligand>
        <name>ATP</name>
        <dbReference type="ChEBI" id="CHEBI:30616"/>
    </ligand>
</feature>
<protein>
    <recommendedName>
        <fullName evidence="1">Phosphoglycerate kinase</fullName>
        <ecNumber evidence="1">2.7.2.3</ecNumber>
    </recommendedName>
</protein>
<dbReference type="EC" id="2.7.2.3" evidence="1"/>
<dbReference type="EMBL" id="CP000264">
    <property type="protein sequence ID" value="ABD54611.1"/>
    <property type="molecule type" value="Genomic_DNA"/>
</dbReference>
<dbReference type="RefSeq" id="WP_011454816.1">
    <property type="nucleotide sequence ID" value="NC_007802.1"/>
</dbReference>
<dbReference type="SMR" id="Q28RQ1"/>
<dbReference type="STRING" id="290400.Jann_1694"/>
<dbReference type="KEGG" id="jan:Jann_1694"/>
<dbReference type="eggNOG" id="COG0126">
    <property type="taxonomic scope" value="Bacteria"/>
</dbReference>
<dbReference type="HOGENOM" id="CLU_025427_0_2_5"/>
<dbReference type="OrthoDB" id="9808460at2"/>
<dbReference type="UniPathway" id="UPA00109">
    <property type="reaction ID" value="UER00185"/>
</dbReference>
<dbReference type="Proteomes" id="UP000008326">
    <property type="component" value="Chromosome"/>
</dbReference>
<dbReference type="GO" id="GO:0005829">
    <property type="term" value="C:cytosol"/>
    <property type="evidence" value="ECO:0007669"/>
    <property type="project" value="TreeGrafter"/>
</dbReference>
<dbReference type="GO" id="GO:0043531">
    <property type="term" value="F:ADP binding"/>
    <property type="evidence" value="ECO:0007669"/>
    <property type="project" value="TreeGrafter"/>
</dbReference>
<dbReference type="GO" id="GO:0005524">
    <property type="term" value="F:ATP binding"/>
    <property type="evidence" value="ECO:0007669"/>
    <property type="project" value="UniProtKB-KW"/>
</dbReference>
<dbReference type="GO" id="GO:0004618">
    <property type="term" value="F:phosphoglycerate kinase activity"/>
    <property type="evidence" value="ECO:0007669"/>
    <property type="project" value="UniProtKB-UniRule"/>
</dbReference>
<dbReference type="GO" id="GO:0006094">
    <property type="term" value="P:gluconeogenesis"/>
    <property type="evidence" value="ECO:0007669"/>
    <property type="project" value="TreeGrafter"/>
</dbReference>
<dbReference type="GO" id="GO:0006096">
    <property type="term" value="P:glycolytic process"/>
    <property type="evidence" value="ECO:0007669"/>
    <property type="project" value="UniProtKB-UniRule"/>
</dbReference>
<dbReference type="FunFam" id="3.40.50.1260:FF:000007">
    <property type="entry name" value="Phosphoglycerate kinase"/>
    <property type="match status" value="1"/>
</dbReference>
<dbReference type="Gene3D" id="3.40.50.1260">
    <property type="entry name" value="Phosphoglycerate kinase, N-terminal domain"/>
    <property type="match status" value="2"/>
</dbReference>
<dbReference type="HAMAP" id="MF_00145">
    <property type="entry name" value="Phosphoglyc_kinase"/>
    <property type="match status" value="1"/>
</dbReference>
<dbReference type="InterPro" id="IPR001576">
    <property type="entry name" value="Phosphoglycerate_kinase"/>
</dbReference>
<dbReference type="InterPro" id="IPR015824">
    <property type="entry name" value="Phosphoglycerate_kinase_N"/>
</dbReference>
<dbReference type="InterPro" id="IPR036043">
    <property type="entry name" value="Phosphoglycerate_kinase_sf"/>
</dbReference>
<dbReference type="PANTHER" id="PTHR11406">
    <property type="entry name" value="PHOSPHOGLYCERATE KINASE"/>
    <property type="match status" value="1"/>
</dbReference>
<dbReference type="PANTHER" id="PTHR11406:SF23">
    <property type="entry name" value="PHOSPHOGLYCERATE KINASE 1, CHLOROPLASTIC-RELATED"/>
    <property type="match status" value="1"/>
</dbReference>
<dbReference type="Pfam" id="PF00162">
    <property type="entry name" value="PGK"/>
    <property type="match status" value="1"/>
</dbReference>
<dbReference type="PIRSF" id="PIRSF000724">
    <property type="entry name" value="Pgk"/>
    <property type="match status" value="1"/>
</dbReference>
<dbReference type="PRINTS" id="PR00477">
    <property type="entry name" value="PHGLYCKINASE"/>
</dbReference>
<dbReference type="SUPFAM" id="SSF53748">
    <property type="entry name" value="Phosphoglycerate kinase"/>
    <property type="match status" value="1"/>
</dbReference>
<keyword id="KW-0067">ATP-binding</keyword>
<keyword id="KW-0963">Cytoplasm</keyword>
<keyword id="KW-0324">Glycolysis</keyword>
<keyword id="KW-0418">Kinase</keyword>
<keyword id="KW-0547">Nucleotide-binding</keyword>
<keyword id="KW-1185">Reference proteome</keyword>
<keyword id="KW-0808">Transferase</keyword>
<sequence length="396" mass="40934">MRFNTLDDMDLAGKLVLTRVDINVPVDGDTVTDATRITRIVPTIKDILAKGGRPVMLAHFGRPKGAYVPEMSLRVTVPALEQALGQPVNFIERPDRATLDALPEGTITLIENTRFSAMEEANDPKMAGFLASLGDVYCNDAFSAAHRAHASTEGVARLLPSCAGRLMEAELSALEAALGAPQRPVVAVVGGAKVSTKLDLLGNLIEKVDTIIIGGGMANTFLAAQGVQVGTSLCEHDLGDTARAIMQKAAAANCTLILPGDIVVAAEFKAGAANAVYDVDACPADQMILDAGPKTVETIAATFNTAKTVIWNGPLGAFEIAPFDAATVTAARAAAEETQAGKLISVAGGGDTVAALNHAGVADQFTYISTAGGAFLEWMEGKTLPGVAALEAAKPA</sequence>
<organism>
    <name type="scientific">Jannaschia sp. (strain CCS1)</name>
    <dbReference type="NCBI Taxonomy" id="290400"/>
    <lineage>
        <taxon>Bacteria</taxon>
        <taxon>Pseudomonadati</taxon>
        <taxon>Pseudomonadota</taxon>
        <taxon>Alphaproteobacteria</taxon>
        <taxon>Rhodobacterales</taxon>
        <taxon>Roseobacteraceae</taxon>
        <taxon>Jannaschia</taxon>
    </lineage>
</organism>
<name>PGK_JANSC</name>
<gene>
    <name evidence="1" type="primary">pgk</name>
    <name type="ordered locus">Jann_1694</name>
</gene>
<proteinExistence type="inferred from homology"/>
<evidence type="ECO:0000255" key="1">
    <source>
        <dbReference type="HAMAP-Rule" id="MF_00145"/>
    </source>
</evidence>
<comment type="catalytic activity">
    <reaction evidence="1">
        <text>(2R)-3-phosphoglycerate + ATP = (2R)-3-phospho-glyceroyl phosphate + ADP</text>
        <dbReference type="Rhea" id="RHEA:14801"/>
        <dbReference type="ChEBI" id="CHEBI:30616"/>
        <dbReference type="ChEBI" id="CHEBI:57604"/>
        <dbReference type="ChEBI" id="CHEBI:58272"/>
        <dbReference type="ChEBI" id="CHEBI:456216"/>
        <dbReference type="EC" id="2.7.2.3"/>
    </reaction>
</comment>
<comment type="pathway">
    <text evidence="1">Carbohydrate degradation; glycolysis; pyruvate from D-glyceraldehyde 3-phosphate: step 2/5.</text>
</comment>
<comment type="subunit">
    <text evidence="1">Monomer.</text>
</comment>
<comment type="subcellular location">
    <subcellularLocation>
        <location evidence="1">Cytoplasm</location>
    </subcellularLocation>
</comment>
<comment type="similarity">
    <text evidence="1">Belongs to the phosphoglycerate kinase family.</text>
</comment>